<feature type="chain" id="PRO_0000406597" description="Limonin dehydrogenase">
    <location>
        <begin position="1" status="less than"/>
        <end position="308" status="greater than"/>
    </location>
</feature>
<feature type="non-consecutive residues" evidence="4">
    <location>
        <begin position="14"/>
        <end position="15"/>
    </location>
</feature>
<feature type="non-consecutive residues" evidence="4">
    <location>
        <begin position="28"/>
        <end position="29"/>
    </location>
</feature>
<feature type="non-consecutive residues" evidence="4">
    <location>
        <begin position="46"/>
        <end position="47"/>
    </location>
</feature>
<feature type="non-consecutive residues" evidence="4">
    <location>
        <begin position="63"/>
        <end position="64"/>
    </location>
</feature>
<feature type="non-consecutive residues" evidence="4">
    <location>
        <begin position="69"/>
        <end position="70"/>
    </location>
</feature>
<feature type="non-consecutive residues" evidence="4">
    <location>
        <begin position="83"/>
        <end position="84"/>
    </location>
</feature>
<feature type="non-consecutive residues" evidence="4">
    <location>
        <begin position="94"/>
        <end position="95"/>
    </location>
</feature>
<feature type="non-consecutive residues" evidence="4">
    <location>
        <begin position="115"/>
        <end position="116"/>
    </location>
</feature>
<feature type="non-consecutive residues" evidence="4">
    <location>
        <begin position="135"/>
        <end position="136"/>
    </location>
</feature>
<feature type="non-consecutive residues" evidence="4">
    <location>
        <begin position="151"/>
        <end position="152"/>
    </location>
</feature>
<feature type="non-consecutive residues" evidence="4">
    <location>
        <begin position="167"/>
        <end position="168"/>
    </location>
</feature>
<feature type="non-consecutive residues" evidence="4">
    <location>
        <begin position="176"/>
        <end position="177"/>
    </location>
</feature>
<feature type="non-consecutive residues" evidence="4">
    <location>
        <begin position="189"/>
        <end position="190"/>
    </location>
</feature>
<feature type="non-consecutive residues" evidence="4">
    <location>
        <begin position="203"/>
        <end position="204"/>
    </location>
</feature>
<feature type="non-consecutive residues" evidence="4">
    <location>
        <begin position="209"/>
        <end position="210"/>
    </location>
</feature>
<feature type="non-consecutive residues" evidence="4">
    <location>
        <begin position="216"/>
        <end position="217"/>
    </location>
</feature>
<feature type="non-consecutive residues" evidence="4">
    <location>
        <begin position="222"/>
        <end position="223"/>
    </location>
</feature>
<feature type="non-consecutive residues" evidence="4">
    <location>
        <begin position="231"/>
        <end position="232"/>
    </location>
</feature>
<feature type="non-consecutive residues" evidence="4">
    <location>
        <begin position="243"/>
        <end position="244"/>
    </location>
</feature>
<feature type="non-consecutive residues" evidence="4">
    <location>
        <begin position="258"/>
        <end position="259"/>
    </location>
</feature>
<feature type="non-consecutive residues" evidence="4">
    <location>
        <begin position="276"/>
        <end position="277"/>
    </location>
</feature>
<feature type="non-consecutive residues" evidence="4">
    <location>
        <begin position="291"/>
        <end position="292"/>
    </location>
</feature>
<feature type="non-consecutive residues" evidence="4">
    <location>
        <begin position="302"/>
        <end position="303"/>
    </location>
</feature>
<feature type="non-terminal residue">
    <location>
        <position position="1"/>
    </location>
</feature>
<feature type="non-terminal residue" evidence="3">
    <location>
        <position position="308"/>
    </location>
</feature>
<protein>
    <recommendedName>
        <fullName evidence="3">Limonin dehydrogenase</fullName>
        <ecNumber>1.2.1.-</ecNumber>
    </recommendedName>
</protein>
<sequence>ALMKTKLFINNTMASSGIGLETDAIKAAQAVYCQGQICMSEEQEALCPFDRLEGEVAIVVGAGPSERRRLLLKVADVMESKTPKFIEVMAMEVGASALWAGFNVHASANVFREAASLATQIQGTPLGFAVPTEAFEMATPDGTGALNYGVRRPKGVIGVISPWNLPLLLMTWKVGPALACGNTVVVKPSRINGLFKDAIDKGAKVVCGGMAQGAVGVLNYLNRVNAVQPGGTVISLCGPASAGFDIANDSVYGLSSGDDMIKQLTPLGFAAKPEDNVEPYLLGASRKQGKGITTTVISIDGGMALGAG</sequence>
<dbReference type="EC" id="1.2.1.-"/>
<dbReference type="SMR" id="P86808"/>
<dbReference type="GO" id="GO:0042597">
    <property type="term" value="C:periplasmic space"/>
    <property type="evidence" value="ECO:0007669"/>
    <property type="project" value="UniProtKB-SubCell"/>
</dbReference>
<dbReference type="GO" id="GO:0016491">
    <property type="term" value="F:oxidoreductase activity"/>
    <property type="evidence" value="ECO:0007669"/>
    <property type="project" value="UniProtKB-KW"/>
</dbReference>
<dbReference type="Gene3D" id="3.40.605.10">
    <property type="entry name" value="Aldehyde Dehydrogenase, Chain A, domain 1"/>
    <property type="match status" value="1"/>
</dbReference>
<dbReference type="Gene3D" id="3.40.50.720">
    <property type="entry name" value="NAD(P)-binding Rossmann-like Domain"/>
    <property type="match status" value="1"/>
</dbReference>
<dbReference type="InterPro" id="IPR016161">
    <property type="entry name" value="Ald_DH/histidinol_DH"/>
</dbReference>
<dbReference type="InterPro" id="IPR016162">
    <property type="entry name" value="Ald_DH_N"/>
</dbReference>
<dbReference type="InterPro" id="IPR015590">
    <property type="entry name" value="Aldehyde_DH_dom"/>
</dbReference>
<dbReference type="PANTHER" id="PTHR42986">
    <property type="entry name" value="BENZALDEHYDE DEHYDROGENASE YFMT"/>
    <property type="match status" value="1"/>
</dbReference>
<dbReference type="PANTHER" id="PTHR42986:SF1">
    <property type="entry name" value="BENZALDEHYDE DEHYDROGENASE YFMT"/>
    <property type="match status" value="1"/>
</dbReference>
<dbReference type="Pfam" id="PF00171">
    <property type="entry name" value="Aldedh"/>
    <property type="match status" value="1"/>
</dbReference>
<dbReference type="SUPFAM" id="SSF53720">
    <property type="entry name" value="ALDH-like"/>
    <property type="match status" value="1"/>
</dbReference>
<comment type="function">
    <text evidence="2">Catalyzes the NAD(+)-dependent conversion of limonin.</text>
</comment>
<comment type="activity regulation">
    <text evidence="2">Completely inhibited by HgCl(2), CoCl(2) and CaCl(2).</text>
</comment>
<comment type="biophysicochemical properties">
    <kinetics>
        <KM evidence="2">4.5 uM for limonin</KM>
    </kinetics>
    <phDependence>
        <text evidence="2">Optimum pH is 8.5.</text>
    </phDependence>
    <temperatureDependence>
        <text evidence="2">Optimum temperature is 35 degrees Celsius.</text>
    </temperatureDependence>
</comment>
<comment type="subcellular location">
    <subcellularLocation>
        <location evidence="2">Periplasm</location>
    </subcellularLocation>
</comment>
<comment type="similarity">
    <text evidence="1">Belongs to the aldehyde dehydrogenase family.</text>
</comment>
<accession>P86808</accession>
<evidence type="ECO:0000255" key="1"/>
<evidence type="ECO:0000269" key="2">
    <source ref="1"/>
</evidence>
<evidence type="ECO:0000303" key="3">
    <source ref="1"/>
</evidence>
<evidence type="ECO:0000305" key="4"/>
<name>LMDH_PSEPU</name>
<reference evidence="4" key="1">
    <citation type="submission" date="2010-09" db="UniProtKB">
        <title>Enhancement of bioconversion of limonin by P.putida G7.</title>
        <authorList>
            <person name="Ghosh M."/>
            <person name="Malik M."/>
        </authorList>
    </citation>
    <scope>IDENTIFICATION BY MASS SPECTROMETRY</scope>
    <scope>FUNCTION</scope>
    <scope>ACTIVITY REGULATION</scope>
    <scope>BIOPHYSICOCHEMICAL PROPERTIES</scope>
    <scope>SUBCELLULAR LOCATION</scope>
    <source>
        <strain>ATCC 17485 / DSM 50208 / JCM 6158 / NCIMB 12092 / Stanier 111 / Biotype A</strain>
    </source>
</reference>
<organism>
    <name type="scientific">Pseudomonas putida</name>
    <name type="common">Arthrobacter siderocapsulatus</name>
    <dbReference type="NCBI Taxonomy" id="303"/>
    <lineage>
        <taxon>Bacteria</taxon>
        <taxon>Pseudomonadati</taxon>
        <taxon>Pseudomonadota</taxon>
        <taxon>Gammaproteobacteria</taxon>
        <taxon>Pseudomonadales</taxon>
        <taxon>Pseudomonadaceae</taxon>
        <taxon>Pseudomonas</taxon>
    </lineage>
</organism>
<keyword id="KW-0520">NAD</keyword>
<keyword id="KW-0560">Oxidoreductase</keyword>
<keyword id="KW-0574">Periplasm</keyword>
<proteinExistence type="evidence at protein level"/>